<gene>
    <name evidence="13 14" type="primary">ribH2</name>
    <name type="synonym">ribH-2</name>
    <name type="ordered locus">BAB2_0545</name>
</gene>
<evidence type="ECO:0000255" key="1">
    <source>
        <dbReference type="HAMAP-Rule" id="MF_00178"/>
    </source>
</evidence>
<evidence type="ECO:0000269" key="2">
    <source>
    </source>
</evidence>
<evidence type="ECO:0000269" key="3">
    <source>
    </source>
</evidence>
<evidence type="ECO:0000269" key="4">
    <source>
    </source>
</evidence>
<evidence type="ECO:0000269" key="5">
    <source>
    </source>
</evidence>
<evidence type="ECO:0000269" key="6">
    <source>
    </source>
</evidence>
<evidence type="ECO:0000269" key="7">
    <source>
    </source>
</evidence>
<evidence type="ECO:0000269" key="8">
    <source>
    </source>
</evidence>
<evidence type="ECO:0000269" key="9">
    <source>
    </source>
</evidence>
<evidence type="ECO:0000269" key="10">
    <source>
    </source>
</evidence>
<evidence type="ECO:0000269" key="11">
    <source>
    </source>
</evidence>
<evidence type="ECO:0000303" key="12">
    <source>
    </source>
</evidence>
<evidence type="ECO:0000303" key="13">
    <source>
    </source>
</evidence>
<evidence type="ECO:0000303" key="14">
    <source>
    </source>
</evidence>
<evidence type="ECO:0000305" key="15">
    <source>
    </source>
</evidence>
<evidence type="ECO:0000305" key="16">
    <source>
    </source>
</evidence>
<evidence type="ECO:0000305" key="17">
    <source>
    </source>
</evidence>
<evidence type="ECO:0007829" key="18">
    <source>
        <dbReference type="PDB" id="1DI0"/>
    </source>
</evidence>
<reference key="1">
    <citation type="journal article" date="2005" name="Infect. Immun.">
        <title>Whole-genome analyses of speciation events in pathogenic Brucellae.</title>
        <authorList>
            <person name="Chain P.S."/>
            <person name="Comerci D.J."/>
            <person name="Tolmasky M.E."/>
            <person name="Larimer F.W."/>
            <person name="Malfatti S.A."/>
            <person name="Vergez L.M."/>
            <person name="Aguero F."/>
            <person name="Land M.L."/>
            <person name="Ugalde R.A."/>
            <person name="Garcia E."/>
        </authorList>
    </citation>
    <scope>NUCLEOTIDE SEQUENCE [LARGE SCALE GENOMIC DNA]</scope>
    <source>
        <strain>2308</strain>
    </source>
</reference>
<reference key="2">
    <citation type="journal article" date="1999" name="J. Med. Microbiol.">
        <title>The 18-kDa cytoplasmic protein of Brucella species -- an antigen useful for diagnosis -- is a lumazine synthase.</title>
        <authorList>
            <person name="Goldbaum F.A."/>
            <person name="Velikovsky C.A."/>
            <person name="Baldi P.C."/>
            <person name="Moertl S."/>
            <person name="Bacher A."/>
            <person name="Fossati C.A."/>
        </authorList>
    </citation>
    <scope>FUNCTION</scope>
    <scope>CATALYTIC ACTIVITY</scope>
    <scope>BIOTECHNOLOGY</scope>
    <scope>SUBCELLULAR LOCATION</scope>
</reference>
<reference key="3">
    <citation type="journal article" date="2003" name="Infect. Immun.">
        <title>Brucella lumazine synthase elicits a mixed Th1-Th2 immune response and reduces infection in mice challenged with Brucella abortus 544 independently of the adjuvant formulation used.</title>
        <authorList>
            <person name="Velikovsky C.A."/>
            <person name="Goldbaum F.A."/>
            <person name="Cassataro J."/>
            <person name="Estein S."/>
            <person name="Bowden R.A."/>
            <person name="Bruno L."/>
            <person name="Fossati C.A."/>
            <person name="Giambartolomei G.H."/>
        </authorList>
    </citation>
    <scope>FUNCTION</scope>
    <scope>BIOTECHNOLOGY</scope>
</reference>
<reference key="4">
    <citation type="journal article" date="2004" name="J. Biol. Chem.">
        <title>High order quaternary arrangement confers increased structural stability to Brucella sp. lumazine synthase.</title>
        <authorList>
            <person name="Zylberman V."/>
            <person name="Craig P.O."/>
            <person name="Klinke S."/>
            <person name="Braden B.C."/>
            <person name="Cauerhff A."/>
            <person name="Goldbaum F.A."/>
        </authorList>
    </citation>
    <scope>SUBUNIT</scope>
    <scope>BIOTECHNOLOGY</scope>
</reference>
<reference key="5">
    <citation type="journal article" date="2004" name="Proteins">
        <title>Engineering of a polymeric bacterial protein as a scaffold for the multiple display of peptides.</title>
        <authorList>
            <person name="Laplagne D.A."/>
            <person name="Zylberman V."/>
            <person name="Ainciart N."/>
            <person name="Steward M.W."/>
            <person name="Sciutto E."/>
            <person name="Fossati C.A."/>
            <person name="Goldbaum F.A."/>
        </authorList>
    </citation>
    <scope>BIOTECHNOLOGY</scope>
</reference>
<reference key="6">
    <citation type="journal article" date="2006" name="J. Bacteriol.">
        <title>Evolution of vitamin B2 biosynthesis: 6,7-dimethyl-8-ribityllumazine synthases of Brucella.</title>
        <authorList>
            <person name="Zylberman V."/>
            <person name="Klinke S."/>
            <person name="Haase I."/>
            <person name="Bacher A."/>
            <person name="Fischer M."/>
            <person name="Goldbaum F.A."/>
        </authorList>
    </citation>
    <scope>GENE NAME</scope>
    <scope>PATHWAY</scope>
</reference>
<reference key="7">
    <citation type="journal article" date="2006" name="J. Immunol.">
        <title>A polymeric bacterial protein activates dendritic cells via TLR4.</title>
        <authorList>
            <person name="Berguer P.M."/>
            <person name="Mundinano J."/>
            <person name="Piazzon I."/>
            <person name="Goldbaum F.A."/>
        </authorList>
    </citation>
    <scope>FUNCTION AS AN IMMUNE MODULATOR</scope>
    <scope>BIOTECHNOLOGY</scope>
</reference>
<reference key="8">
    <citation type="journal article" date="2010" name="PLoS ONE">
        <title>An atypical riboflavin pathway is essential for Brucella abortus virulence.</title>
        <authorList>
            <person name="Bonomi H.R."/>
            <person name="Marchesini M.I."/>
            <person name="Klinke S."/>
            <person name="Ugalde J.E."/>
            <person name="Zylberman V."/>
            <person name="Ugalde R.A."/>
            <person name="Comerci D.J."/>
            <person name="Goldbaum F.A."/>
        </authorList>
    </citation>
    <scope>FUNCTION</scope>
    <scope>CATALYTIC ACTIVITY</scope>
    <scope>ROLE IN VIRULENCE</scope>
    <scope>GENE NAME</scope>
    <scope>DISRUPTION PHENOTYPE</scope>
    <scope>MUTAGENESIS OF TRP-20</scope>
    <scope>INDUCTION</scope>
    <scope>PATHWAY</scope>
    <source>
        <strain>2308</strain>
    </source>
</reference>
<reference key="9">
    <citation type="journal article" date="2012" name="PLoS ONE">
        <title>A polymeric protein induces specific cytotoxicity in a TLR4 dependent manner in the absence of adjuvants.</title>
        <authorList>
            <person name="Berguer P.M."/>
            <person name="Alzogaray V.A."/>
            <person name="Rossi A.H."/>
            <person name="Mundinano J."/>
            <person name="Piazzon I."/>
            <person name="Goldbaum F.A."/>
        </authorList>
    </citation>
    <scope>FUNCTION AS AN IMMUNE MODULATOR</scope>
    <scope>BIOTECHNOLOGY</scope>
</reference>
<reference key="10">
    <citation type="journal article" date="2015" name="PLoS ONE">
        <title>Brucella spp. lumazine synthase induces a TLR4-mediated protective response against B16 melanoma in mice.</title>
        <authorList>
            <person name="Rossi A.H."/>
            <person name="Farias A."/>
            <person name="Fernandez J.E."/>
            <person name="Bonomi H.R."/>
            <person name="Goldbaum F.A."/>
            <person name="Berguer P.M."/>
        </authorList>
    </citation>
    <scope>FUNCTION AS AN IMMUNE MODULATOR</scope>
    <scope>BIOTECHNOLOGY</scope>
</reference>
<reference key="11">
    <citation type="journal article" date="2000" name="J. Mol. Biol.">
        <title>Divergence in macromolecular assembly: X-ray crystallographic structure analysis of lumazine synthase from Brucella abortus.</title>
        <authorList>
            <person name="Braden B.C."/>
            <person name="Velikovsky C.A."/>
            <person name="Cauerhff A.A."/>
            <person name="Polikarpov I."/>
            <person name="Goldbaum F.A."/>
        </authorList>
    </citation>
    <scope>X-RAY CRYSTALLOGRAPHY (2.7 ANGSTROMS) IN COMPLEX WITH PHOSPHATE</scope>
</reference>
<reference key="12">
    <citation type="journal article" date="2005" name="J. Mol. Biol.">
        <title>Crystallographic studies on decameric Brucella spp. lumazine synthase: a novel quaternary arrangement evolved for a new function?</title>
        <authorList>
            <person name="Klinke S."/>
            <person name="Zylberman V."/>
            <person name="Vega D.R."/>
            <person name="Guimaraes B.G."/>
            <person name="Braden B.C."/>
            <person name="Goldbaum F.A."/>
        </authorList>
    </citation>
    <scope>X-RAY CRYSTALLOGRAPHY (2.90 ANGSTROMS) OF APOENZYME AND IN COMPLEX WITH SUBSTRATE ANALOG INHIBITOR AND PHOSPHATE</scope>
    <scope>FUNCTION</scope>
    <scope>CATALYTIC ACTIVITY</scope>
    <scope>KINETIC PARAMETERS</scope>
</reference>
<keyword id="KW-0002">3D-structure</keyword>
<keyword id="KW-0963">Cytoplasm</keyword>
<keyword id="KW-1185">Reference proteome</keyword>
<keyword id="KW-0686">Riboflavin biosynthesis</keyword>
<keyword id="KW-0808">Transferase</keyword>
<keyword id="KW-0843">Virulence</keyword>
<dbReference type="EC" id="2.5.1.78" evidence="1 2 7 9"/>
<dbReference type="EMBL" id="AM040265">
    <property type="protein sequence ID" value="CAJ12711.1"/>
    <property type="molecule type" value="Genomic_DNA"/>
</dbReference>
<dbReference type="RefSeq" id="WP_002965946.1">
    <property type="nucleotide sequence ID" value="NZ_KN046823.1"/>
</dbReference>
<dbReference type="PDB" id="1DI0">
    <property type="method" value="X-ray"/>
    <property type="resolution" value="2.70 A"/>
    <property type="chains" value="A/B/C/D/E=1-158"/>
</dbReference>
<dbReference type="PDB" id="1T13">
    <property type="method" value="X-ray"/>
    <property type="resolution" value="2.90 A"/>
    <property type="chains" value="A/B/C/D/E=1-158"/>
</dbReference>
<dbReference type="PDB" id="1XN1">
    <property type="method" value="X-ray"/>
    <property type="resolution" value="3.05 A"/>
    <property type="chains" value="A/B/C/D/E/F/G/H/I/J=1-158"/>
</dbReference>
<dbReference type="PDBsum" id="1DI0"/>
<dbReference type="PDBsum" id="1T13"/>
<dbReference type="PDBsum" id="1XN1"/>
<dbReference type="SMR" id="Q2YKV1"/>
<dbReference type="STRING" id="359391.BAB2_0545"/>
<dbReference type="KEGG" id="bmf:BAB2_0545"/>
<dbReference type="PATRIC" id="fig|359391.11.peg.2737"/>
<dbReference type="HOGENOM" id="CLU_089358_0_0_5"/>
<dbReference type="PhylomeDB" id="Q2YKV1"/>
<dbReference type="BRENDA" id="2.5.1.78">
    <property type="organism ID" value="994"/>
</dbReference>
<dbReference type="UniPathway" id="UPA00275">
    <property type="reaction ID" value="UER00404"/>
</dbReference>
<dbReference type="Proteomes" id="UP000002719">
    <property type="component" value="Chromosome II"/>
</dbReference>
<dbReference type="GO" id="GO:0005829">
    <property type="term" value="C:cytosol"/>
    <property type="evidence" value="ECO:0007669"/>
    <property type="project" value="TreeGrafter"/>
</dbReference>
<dbReference type="GO" id="GO:0009349">
    <property type="term" value="C:riboflavin synthase complex"/>
    <property type="evidence" value="ECO:0007669"/>
    <property type="project" value="InterPro"/>
</dbReference>
<dbReference type="GO" id="GO:0000906">
    <property type="term" value="F:6,7-dimethyl-8-ribityllumazine synthase activity"/>
    <property type="evidence" value="ECO:0007669"/>
    <property type="project" value="UniProtKB-UniRule"/>
</dbReference>
<dbReference type="GO" id="GO:0009231">
    <property type="term" value="P:riboflavin biosynthetic process"/>
    <property type="evidence" value="ECO:0007669"/>
    <property type="project" value="UniProtKB-UniRule"/>
</dbReference>
<dbReference type="CDD" id="cd09208">
    <property type="entry name" value="Lumazine_synthase-II"/>
    <property type="match status" value="1"/>
</dbReference>
<dbReference type="Gene3D" id="3.40.50.960">
    <property type="entry name" value="Lumazine/riboflavin synthase"/>
    <property type="match status" value="1"/>
</dbReference>
<dbReference type="HAMAP" id="MF_00178">
    <property type="entry name" value="Lumazine_synth"/>
    <property type="match status" value="1"/>
</dbReference>
<dbReference type="InterPro" id="IPR034964">
    <property type="entry name" value="LS"/>
</dbReference>
<dbReference type="InterPro" id="IPR002180">
    <property type="entry name" value="LS/RS"/>
</dbReference>
<dbReference type="InterPro" id="IPR036467">
    <property type="entry name" value="LS/RS_sf"/>
</dbReference>
<dbReference type="NCBIfam" id="NF009084">
    <property type="entry name" value="PRK12419.1"/>
    <property type="match status" value="1"/>
</dbReference>
<dbReference type="PANTHER" id="PTHR21058:SF0">
    <property type="entry name" value="6,7-DIMETHYL-8-RIBITYLLUMAZINE SYNTHASE"/>
    <property type="match status" value="1"/>
</dbReference>
<dbReference type="PANTHER" id="PTHR21058">
    <property type="entry name" value="6,7-DIMETHYL-8-RIBITYLLUMAZINE SYNTHASE DMRL SYNTHASE LUMAZINE SYNTHASE"/>
    <property type="match status" value="1"/>
</dbReference>
<dbReference type="Pfam" id="PF00885">
    <property type="entry name" value="DMRL_synthase"/>
    <property type="match status" value="1"/>
</dbReference>
<dbReference type="SUPFAM" id="SSF52121">
    <property type="entry name" value="Lumazine synthase"/>
    <property type="match status" value="1"/>
</dbReference>
<sequence length="158" mass="17356">MNQSCPNKTSFKIAFIQARWHADIVDEARKSFVAELAAKTGGSVEVEIFDVPGAYEIPLHAKTLARTGRYAAIVGAAFVIDGGIYRHDFVATAVINGMMQVQLETEVPVLSVVLTPHHFHESKEHHDFFHAHFKVKGVEAAHAALQIVSERSRIAALV</sequence>
<feature type="chain" id="PRO_0000425958" description="6,7-dimethyl-8-ribityllumazine synthase 2">
    <location>
        <begin position="1"/>
        <end position="158"/>
    </location>
</feature>
<feature type="active site" description="Proton donor" evidence="1">
    <location>
        <position position="86"/>
    </location>
</feature>
<feature type="binding site" evidence="15">
    <location>
        <position position="20"/>
    </location>
    <ligand>
        <name>5-amino-6-(D-ribitylamino)uracil</name>
        <dbReference type="ChEBI" id="CHEBI:15934"/>
    </ligand>
</feature>
<feature type="binding site" evidence="15">
    <location>
        <begin position="54"/>
        <end position="56"/>
    </location>
    <ligand>
        <name>5-amino-6-(D-ribitylamino)uracil</name>
        <dbReference type="ChEBI" id="CHEBI:15934"/>
    </ligand>
</feature>
<feature type="binding site" evidence="15">
    <location>
        <begin position="78"/>
        <end position="80"/>
    </location>
    <ligand>
        <name>5-amino-6-(D-ribitylamino)uracil</name>
        <dbReference type="ChEBI" id="CHEBI:15934"/>
    </ligand>
</feature>
<feature type="binding site" evidence="15">
    <location>
        <position position="111"/>
    </location>
    <ligand>
        <name>5-amino-6-(D-ribitylamino)uracil</name>
        <dbReference type="ChEBI" id="CHEBI:15934"/>
    </ligand>
</feature>
<feature type="binding site" evidence="1">
    <location>
        <position position="125"/>
    </location>
    <ligand>
        <name>(2S)-2-hydroxy-3-oxobutyl phosphate</name>
        <dbReference type="ChEBI" id="CHEBI:58830"/>
    </ligand>
</feature>
<feature type="mutagenesis site" description="Loss of enzymatic activity." evidence="9">
    <original>W</original>
    <variation>A</variation>
    <location>
        <position position="20"/>
    </location>
</feature>
<feature type="strand" evidence="18">
    <location>
        <begin position="11"/>
        <end position="18"/>
    </location>
</feature>
<feature type="helix" evidence="18">
    <location>
        <begin position="22"/>
        <end position="40"/>
    </location>
</feature>
<feature type="strand" evidence="18">
    <location>
        <begin position="43"/>
        <end position="53"/>
    </location>
</feature>
<feature type="helix" evidence="18">
    <location>
        <begin position="54"/>
        <end position="56"/>
    </location>
</feature>
<feature type="helix" evidence="18">
    <location>
        <begin position="57"/>
        <end position="66"/>
    </location>
</feature>
<feature type="strand" evidence="18">
    <location>
        <begin position="71"/>
        <end position="78"/>
    </location>
</feature>
<feature type="strand" evidence="18">
    <location>
        <begin position="83"/>
        <end position="85"/>
    </location>
</feature>
<feature type="helix" evidence="18">
    <location>
        <begin position="88"/>
        <end position="105"/>
    </location>
</feature>
<feature type="strand" evidence="18">
    <location>
        <begin position="109"/>
        <end position="114"/>
    </location>
</feature>
<feature type="strand" evidence="18">
    <location>
        <begin position="116"/>
        <end position="118"/>
    </location>
</feature>
<feature type="helix" evidence="18">
    <location>
        <begin position="123"/>
        <end position="153"/>
    </location>
</feature>
<protein>
    <recommendedName>
        <fullName evidence="1">6,7-dimethyl-8-ribityllumazine synthase 2</fullName>
        <shortName evidence="1">DMRL synthase 2</shortName>
        <shortName evidence="1">LS 2</shortName>
        <shortName evidence="1">Lumazine synthase 2</shortName>
        <ecNumber evidence="1 2 7 9">2.5.1.78</ecNumber>
    </recommendedName>
    <alternativeName>
        <fullName evidence="12">BLS</fullName>
    </alternativeName>
    <alternativeName>
        <fullName evidence="13">Type II lumazine synthase</fullName>
    </alternativeName>
</protein>
<accession>Q2YKV1</accession>
<comment type="function">
    <text evidence="2 4 7 8 9 10 11">Catalyzes the formation of 6,7-dimethyl-8-ribityllumazine by condensation of 5-amino-6-(D-ribitylamino)uracil with 3,4-dihydroxy-2-butanone 4-phosphate (PubMed:10482294, PubMed:16165152, PubMed:20195542). This is the penultimate step in the biosynthesis of riboflavin. The isozyme RibH2 but not RibH1 is essential for Brucella intracellular survival and replication inside macrophages or in mice (PubMed:20195542). Displays low catalytic activity in comparison with the isozyme RibH1 (PubMed:16165152). Is a highly immunogenic protein (PubMed:14500496). Activates dendritic cells (DCs) in vitro, increasing the levels of costimulatory molecules and the secretion of pro-inflammatory cytokines, and recruits DCs, B cells and CD8+ T cells in vivo, both effects in a TLR4-dependent manner (PubMed:16455994). Induces the cross presentation of covalently attached peptides and generates a strong and long-lasting humoral immune response without adjuvants; TLR4 signaling is necessary for the induction of the cytotoxic response but not for antigen cross presentation (PubMed:23029192). Elicits a TLR4-mediated protective response against B16 melanoma in mice, slowing tumor growth and prolonging mice survival (PubMed:25973756).</text>
</comment>
<comment type="catalytic activity">
    <reaction evidence="1 2 7 9">
        <text>(2S)-2-hydroxy-3-oxobutyl phosphate + 5-amino-6-(D-ribitylamino)uracil = 6,7-dimethyl-8-(1-D-ribityl)lumazine + phosphate + 2 H2O + H(+)</text>
        <dbReference type="Rhea" id="RHEA:26152"/>
        <dbReference type="ChEBI" id="CHEBI:15377"/>
        <dbReference type="ChEBI" id="CHEBI:15378"/>
        <dbReference type="ChEBI" id="CHEBI:15934"/>
        <dbReference type="ChEBI" id="CHEBI:43474"/>
        <dbReference type="ChEBI" id="CHEBI:58201"/>
        <dbReference type="ChEBI" id="CHEBI:58830"/>
        <dbReference type="EC" id="2.5.1.78"/>
    </reaction>
</comment>
<comment type="biophysicochemical properties">
    <kinetics>
        <KM evidence="7">10 uM for 5-amino-6-(D-ribitylamino)uracil (at 37 degrees Celsius and pH 7.0)</KM>
        <KM evidence="7">4000 uM for 3,4-dihydroxy-2-butanone 4-phosphate (at 37 degrees Celsius and pH 7.0)</KM>
        <Vmax evidence="7">20.0 nmol/min/mg enzyme (at 37 degrees Celsius and pH 7.0)</Vmax>
    </kinetics>
</comment>
<comment type="pathway">
    <text evidence="1 16 17">Cofactor biosynthesis; riboflavin biosynthesis; riboflavin from 2-hydroxy-3-oxobutyl phosphate and 5-amino-6-(D-ribitylamino)uracil: step 1/2.</text>
</comment>
<comment type="subunit">
    <text evidence="3 5 7">Homodecamer, arranged as a dimer of pentamers.</text>
</comment>
<comment type="subcellular location">
    <subcellularLocation>
        <location evidence="2">Cytoplasm</location>
    </subcellularLocation>
</comment>
<comment type="induction">
    <text evidence="17">The two ribH genes may be differentially expressed during the Brucella infection cycle. Brucella would use RibH1 for flavin biosynthesis during the extracellular phase and RibH2 during intracellular growth.</text>
</comment>
<comment type="disruption phenotype">
    <text evidence="9">Cells lacking this gene are not auxotrophic for riboflavin and grow at wild-type rates in both rich and minimal media. But simultaneous disruption of ribH1 and ribH2 is lethal. The ribH2 mutant shows a decrease in survival and replication in macrophages at all time-points and is attenuated in mice.</text>
</comment>
<comment type="biotechnology">
    <text evidence="2 4 5 6 8 10 11">Could be useful as a specific antigen for the serological diagnosis of active infection of both human and bovine brucellosis (PubMed:10482294). Has been used as a protein carrier of foreign peptides and proteins (PubMed:15390265). The described characteristics of BLS make this protein an ideal antigen carrier for vaccine development (PubMed:14500496, PubMed:14660615, PubMed:15390265, PubMed:16455994, PubMed:23029192). The antitumor effect of BLS could lead to a therapeutic strategy utilizing a TLR4 ligand; as the expression of TLR4 has been reported on a large number of tumors, BLS signaling via TLR4 could make a notable contribution to the success of cancer treatment when coadministered with other cancer vaccines or treatments like radiation or chemotherapy (PubMed:25973756).</text>
</comment>
<comment type="similarity">
    <text evidence="1">Belongs to the DMRL synthase family.</text>
</comment>
<proteinExistence type="evidence at protein level"/>
<name>RISB2_BRUA2</name>
<organism>
    <name type="scientific">Brucella abortus (strain 2308)</name>
    <dbReference type="NCBI Taxonomy" id="359391"/>
    <lineage>
        <taxon>Bacteria</taxon>
        <taxon>Pseudomonadati</taxon>
        <taxon>Pseudomonadota</taxon>
        <taxon>Alphaproteobacteria</taxon>
        <taxon>Hyphomicrobiales</taxon>
        <taxon>Brucellaceae</taxon>
        <taxon>Brucella/Ochrobactrum group</taxon>
        <taxon>Brucella</taxon>
    </lineage>
</organism>